<name>APEA_DICDI</name>
<organism>
    <name type="scientific">Dictyostelium discoideum</name>
    <name type="common">Social amoeba</name>
    <dbReference type="NCBI Taxonomy" id="44689"/>
    <lineage>
        <taxon>Eukaryota</taxon>
        <taxon>Amoebozoa</taxon>
        <taxon>Evosea</taxon>
        <taxon>Eumycetozoa</taxon>
        <taxon>Dictyostelia</taxon>
        <taxon>Dictyosteliales</taxon>
        <taxon>Dictyosteliaceae</taxon>
        <taxon>Dictyostelium</taxon>
    </lineage>
</organism>
<keyword id="KW-0227">DNA damage</keyword>
<keyword id="KW-0234">DNA repair</keyword>
<keyword id="KW-0378">Hydrolase</keyword>
<keyword id="KW-0460">Magnesium</keyword>
<keyword id="KW-0479">Metal-binding</keyword>
<keyword id="KW-0539">Nucleus</keyword>
<keyword id="KW-1185">Reference proteome</keyword>
<accession>P51173</accession>
<accession>Q54Z97</accession>
<accession>Q75K06</accession>
<sequence>MTSRTKKLKMDEEEILKKEDGSETTSEEEKEEVEEEEEEDKKRKLVKKTPAKKAPAKKAAAKKKSKDEDEDEEEKEEEEETNKTTASVSIAIDNLDEPKVEENQMKIISWNVAGFKSVLSKGFTEYVEKENPDVLCLQETKINPSNIKKDQMPKGYEYHFIEADQKGHHGTGVLTKKKPNAITFGIGIAKHDNEGRVITLEYDQFYIVNTYIPNAGTRGLQRLDYRIKEWDVDFQAYLEKLNATKPIIWCGDLNVAHTEIDLKNPKTNKKSAGFTIEERTSFSNFLEKGYVDSYRHFNPGKEGSYTFWSYLGGGRSKNVGWRLDYFVVSKRLMDSIKISPFHRTSVMGSDHCPIGVVVDLN</sequence>
<evidence type="ECO:0000250" key="1"/>
<evidence type="ECO:0000255" key="2"/>
<evidence type="ECO:0000255" key="3">
    <source>
        <dbReference type="PROSITE-ProRule" id="PRU00764"/>
    </source>
</evidence>
<evidence type="ECO:0000256" key="4">
    <source>
        <dbReference type="SAM" id="MobiDB-lite"/>
    </source>
</evidence>
<evidence type="ECO:0000305" key="5"/>
<protein>
    <recommendedName>
        <fullName>DNA-(apurinic or apyrimidinic site) endonuclease</fullName>
        <ecNumber>3.1.-.-</ecNumber>
    </recommendedName>
    <alternativeName>
        <fullName>Class II apurinic/apyrimidinic(AP)-endonuclease</fullName>
    </alternativeName>
</protein>
<reference key="1">
    <citation type="journal article" date="1996" name="Nucleic Acids Res.">
        <title>Apurinic/apyrimidinic (AP) endonuclease from Dictyostelium discoideum: cloning, nucleotide sequence and induction by sublethal levels of DNA damaging agents.</title>
        <authorList>
            <person name="Freeland T.M."/>
            <person name="Guyer R.B."/>
            <person name="Ling A.Z."/>
            <person name="Deering R.A."/>
        </authorList>
    </citation>
    <scope>NUCLEOTIDE SEQUENCE [GENOMIC DNA]</scope>
</reference>
<reference key="2">
    <citation type="journal article" date="2002" name="Nature">
        <title>Sequence and analysis of chromosome 2 of Dictyostelium discoideum.</title>
        <authorList>
            <person name="Gloeckner G."/>
            <person name="Eichinger L."/>
            <person name="Szafranski K."/>
            <person name="Pachebat J.A."/>
            <person name="Bankier A.T."/>
            <person name="Dear P.H."/>
            <person name="Lehmann R."/>
            <person name="Baumgart C."/>
            <person name="Parra G."/>
            <person name="Abril J.F."/>
            <person name="Guigo R."/>
            <person name="Kumpf K."/>
            <person name="Tunggal B."/>
            <person name="Cox E.C."/>
            <person name="Quail M.A."/>
            <person name="Platzer M."/>
            <person name="Rosenthal A."/>
            <person name="Noegel A.A."/>
        </authorList>
    </citation>
    <scope>NUCLEOTIDE SEQUENCE [LARGE SCALE GENOMIC DNA]</scope>
    <source>
        <strain>AX4</strain>
    </source>
</reference>
<reference key="3">
    <citation type="journal article" date="2005" name="Nature">
        <title>The genome of the social amoeba Dictyostelium discoideum.</title>
        <authorList>
            <person name="Eichinger L."/>
            <person name="Pachebat J.A."/>
            <person name="Gloeckner G."/>
            <person name="Rajandream M.A."/>
            <person name="Sucgang R."/>
            <person name="Berriman M."/>
            <person name="Song J."/>
            <person name="Olsen R."/>
            <person name="Szafranski K."/>
            <person name="Xu Q."/>
            <person name="Tunggal B."/>
            <person name="Kummerfeld S."/>
            <person name="Madera M."/>
            <person name="Konfortov B.A."/>
            <person name="Rivero F."/>
            <person name="Bankier A.T."/>
            <person name="Lehmann R."/>
            <person name="Hamlin N."/>
            <person name="Davies R."/>
            <person name="Gaudet P."/>
            <person name="Fey P."/>
            <person name="Pilcher K."/>
            <person name="Chen G."/>
            <person name="Saunders D."/>
            <person name="Sodergren E.J."/>
            <person name="Davis P."/>
            <person name="Kerhornou A."/>
            <person name="Nie X."/>
            <person name="Hall N."/>
            <person name="Anjard C."/>
            <person name="Hemphill L."/>
            <person name="Bason N."/>
            <person name="Farbrother P."/>
            <person name="Desany B."/>
            <person name="Just E."/>
            <person name="Morio T."/>
            <person name="Rost R."/>
            <person name="Churcher C.M."/>
            <person name="Cooper J."/>
            <person name="Haydock S."/>
            <person name="van Driessche N."/>
            <person name="Cronin A."/>
            <person name="Goodhead I."/>
            <person name="Muzny D.M."/>
            <person name="Mourier T."/>
            <person name="Pain A."/>
            <person name="Lu M."/>
            <person name="Harper D."/>
            <person name="Lindsay R."/>
            <person name="Hauser H."/>
            <person name="James K.D."/>
            <person name="Quiles M."/>
            <person name="Madan Babu M."/>
            <person name="Saito T."/>
            <person name="Buchrieser C."/>
            <person name="Wardroper A."/>
            <person name="Felder M."/>
            <person name="Thangavelu M."/>
            <person name="Johnson D."/>
            <person name="Knights A."/>
            <person name="Loulseged H."/>
            <person name="Mungall K.L."/>
            <person name="Oliver K."/>
            <person name="Price C."/>
            <person name="Quail M.A."/>
            <person name="Urushihara H."/>
            <person name="Hernandez J."/>
            <person name="Rabbinowitsch E."/>
            <person name="Steffen D."/>
            <person name="Sanders M."/>
            <person name="Ma J."/>
            <person name="Kohara Y."/>
            <person name="Sharp S."/>
            <person name="Simmonds M.N."/>
            <person name="Spiegler S."/>
            <person name="Tivey A."/>
            <person name="Sugano S."/>
            <person name="White B."/>
            <person name="Walker D."/>
            <person name="Woodward J.R."/>
            <person name="Winckler T."/>
            <person name="Tanaka Y."/>
            <person name="Shaulsky G."/>
            <person name="Schleicher M."/>
            <person name="Weinstock G.M."/>
            <person name="Rosenthal A."/>
            <person name="Cox E.C."/>
            <person name="Chisholm R.L."/>
            <person name="Gibbs R.A."/>
            <person name="Loomis W.F."/>
            <person name="Platzer M."/>
            <person name="Kay R.R."/>
            <person name="Williams J.G."/>
            <person name="Dear P.H."/>
            <person name="Noegel A.A."/>
            <person name="Barrell B.G."/>
            <person name="Kuspa A."/>
        </authorList>
    </citation>
    <scope>NUCLEOTIDE SEQUENCE [LARGE SCALE GENOMIC DNA]</scope>
    <source>
        <strain>AX4</strain>
    </source>
</reference>
<gene>
    <name type="primary">apeA</name>
    <name type="ORF">DDB_G0277701</name>
</gene>
<proteinExistence type="evidence at transcript level"/>
<dbReference type="EC" id="3.1.-.-"/>
<dbReference type="EMBL" id="U31631">
    <property type="protein sequence ID" value="AAC47024.1"/>
    <property type="molecule type" value="Genomic_DNA"/>
</dbReference>
<dbReference type="EMBL" id="AAFI02000021">
    <property type="protein sequence ID" value="EAL68586.1"/>
    <property type="molecule type" value="Genomic_DNA"/>
</dbReference>
<dbReference type="PIR" id="S68268">
    <property type="entry name" value="S68268"/>
</dbReference>
<dbReference type="RefSeq" id="XP_642518.1">
    <property type="nucleotide sequence ID" value="XM_637426.1"/>
</dbReference>
<dbReference type="SMR" id="P51173"/>
<dbReference type="FunCoup" id="P51173">
    <property type="interactions" value="679"/>
</dbReference>
<dbReference type="STRING" id="44689.P51173"/>
<dbReference type="PaxDb" id="44689-DDB0185018"/>
<dbReference type="EnsemblProtists" id="EAL68586">
    <property type="protein sequence ID" value="EAL68586"/>
    <property type="gene ID" value="DDB_G0277701"/>
</dbReference>
<dbReference type="GeneID" id="8621167"/>
<dbReference type="KEGG" id="ddi:DDB_G0277701"/>
<dbReference type="dictyBase" id="DDB_G0277701">
    <property type="gene designation" value="apeA"/>
</dbReference>
<dbReference type="VEuPathDB" id="AmoebaDB:DDB_G0277701"/>
<dbReference type="eggNOG" id="KOG1294">
    <property type="taxonomic scope" value="Eukaryota"/>
</dbReference>
<dbReference type="HOGENOM" id="CLU_027539_1_3_1"/>
<dbReference type="InParanoid" id="P51173"/>
<dbReference type="OMA" id="WWSYRGR"/>
<dbReference type="PhylomeDB" id="P51173"/>
<dbReference type="Reactome" id="R-DDI-110357">
    <property type="pathway name" value="Displacement of DNA glycosylase by APEX1"/>
</dbReference>
<dbReference type="Reactome" id="R-DDI-110362">
    <property type="pathway name" value="POLB-Dependent Long Patch Base Excision Repair"/>
</dbReference>
<dbReference type="Reactome" id="R-DDI-110373">
    <property type="pathway name" value="Resolution of AP sites via the multiple-nucleotide patch replacement pathway"/>
</dbReference>
<dbReference type="Reactome" id="R-DDI-5651801">
    <property type="pathway name" value="PCNA-Dependent Long Patch Base Excision Repair"/>
</dbReference>
<dbReference type="Reactome" id="R-DDI-73930">
    <property type="pathway name" value="Abasic sugar-phosphate removal via the single-nucleotide replacement pathway"/>
</dbReference>
<dbReference type="Reactome" id="R-DDI-73933">
    <property type="pathway name" value="Resolution of Abasic Sites (AP sites)"/>
</dbReference>
<dbReference type="PRO" id="PR:P51173"/>
<dbReference type="Proteomes" id="UP000002195">
    <property type="component" value="Chromosome 2"/>
</dbReference>
<dbReference type="GO" id="GO:0005634">
    <property type="term" value="C:nucleus"/>
    <property type="evidence" value="ECO:0000318"/>
    <property type="project" value="GO_Central"/>
</dbReference>
<dbReference type="GO" id="GO:0003677">
    <property type="term" value="F:DNA binding"/>
    <property type="evidence" value="ECO:0007669"/>
    <property type="project" value="InterPro"/>
</dbReference>
<dbReference type="GO" id="GO:0016889">
    <property type="term" value="F:DNA endonuclease activity, producing 3'-phosphomonoesters"/>
    <property type="evidence" value="ECO:0000304"/>
    <property type="project" value="dictyBase"/>
</dbReference>
<dbReference type="GO" id="GO:0003906">
    <property type="term" value="F:DNA-(apurinic or apyrimidinic site) endonuclease activity"/>
    <property type="evidence" value="ECO:0000318"/>
    <property type="project" value="GO_Central"/>
</dbReference>
<dbReference type="GO" id="GO:0008311">
    <property type="term" value="F:double-stranded DNA 3'-5' DNA exonuclease activity"/>
    <property type="evidence" value="ECO:0000318"/>
    <property type="project" value="GO_Central"/>
</dbReference>
<dbReference type="GO" id="GO:0046872">
    <property type="term" value="F:metal ion binding"/>
    <property type="evidence" value="ECO:0007669"/>
    <property type="project" value="UniProtKB-KW"/>
</dbReference>
<dbReference type="GO" id="GO:0008081">
    <property type="term" value="F:phosphoric diester hydrolase activity"/>
    <property type="evidence" value="ECO:0000318"/>
    <property type="project" value="GO_Central"/>
</dbReference>
<dbReference type="GO" id="GO:0006284">
    <property type="term" value="P:base-excision repair"/>
    <property type="evidence" value="ECO:0000318"/>
    <property type="project" value="GO_Central"/>
</dbReference>
<dbReference type="CDD" id="cd09087">
    <property type="entry name" value="Ape1-like_AP-endo"/>
    <property type="match status" value="1"/>
</dbReference>
<dbReference type="FunFam" id="3.60.10.10:FF:000034">
    <property type="entry name" value="Exodeoxyribonuclease III"/>
    <property type="match status" value="1"/>
</dbReference>
<dbReference type="Gene3D" id="3.60.10.10">
    <property type="entry name" value="Endonuclease/exonuclease/phosphatase"/>
    <property type="match status" value="1"/>
</dbReference>
<dbReference type="InterPro" id="IPR004808">
    <property type="entry name" value="AP_endonuc_1"/>
</dbReference>
<dbReference type="InterPro" id="IPR020847">
    <property type="entry name" value="AP_endonuclease_F1_BS"/>
</dbReference>
<dbReference type="InterPro" id="IPR020848">
    <property type="entry name" value="AP_endonuclease_F1_CS"/>
</dbReference>
<dbReference type="InterPro" id="IPR036691">
    <property type="entry name" value="Endo/exonu/phosph_ase_sf"/>
</dbReference>
<dbReference type="InterPro" id="IPR005135">
    <property type="entry name" value="Endo/exonuclease/phosphatase"/>
</dbReference>
<dbReference type="NCBIfam" id="TIGR00195">
    <property type="entry name" value="exoDNase_III"/>
    <property type="match status" value="1"/>
</dbReference>
<dbReference type="NCBIfam" id="TIGR00633">
    <property type="entry name" value="xth"/>
    <property type="match status" value="1"/>
</dbReference>
<dbReference type="PANTHER" id="PTHR22748">
    <property type="entry name" value="AP ENDONUCLEASE"/>
    <property type="match status" value="1"/>
</dbReference>
<dbReference type="PANTHER" id="PTHR22748:SF6">
    <property type="entry name" value="DNA-(APURINIC OR APYRIMIDINIC SITE) ENDONUCLEASE"/>
    <property type="match status" value="1"/>
</dbReference>
<dbReference type="Pfam" id="PF03372">
    <property type="entry name" value="Exo_endo_phos"/>
    <property type="match status" value="1"/>
</dbReference>
<dbReference type="SUPFAM" id="SSF56219">
    <property type="entry name" value="DNase I-like"/>
    <property type="match status" value="1"/>
</dbReference>
<dbReference type="PROSITE" id="PS00726">
    <property type="entry name" value="AP_NUCLEASE_F1_1"/>
    <property type="match status" value="1"/>
</dbReference>
<dbReference type="PROSITE" id="PS00727">
    <property type="entry name" value="AP_NUCLEASE_F1_2"/>
    <property type="match status" value="1"/>
</dbReference>
<dbReference type="PROSITE" id="PS00728">
    <property type="entry name" value="AP_NUCLEASE_F1_3"/>
    <property type="match status" value="1"/>
</dbReference>
<dbReference type="PROSITE" id="PS51435">
    <property type="entry name" value="AP_NUCLEASE_F1_4"/>
    <property type="match status" value="1"/>
</dbReference>
<feature type="chain" id="PRO_0000200016" description="DNA-(apurinic or apyrimidinic site) endonuclease">
    <location>
        <begin position="1"/>
        <end position="361"/>
    </location>
</feature>
<feature type="region of interest" description="Disordered" evidence="4">
    <location>
        <begin position="1"/>
        <end position="90"/>
    </location>
</feature>
<feature type="short sequence motif" description="Nuclear localization signal" evidence="2">
    <location>
        <begin position="41"/>
        <end position="44"/>
    </location>
</feature>
<feature type="compositionally biased region" description="Acidic residues" evidence="4">
    <location>
        <begin position="25"/>
        <end position="39"/>
    </location>
</feature>
<feature type="compositionally biased region" description="Basic residues" evidence="4">
    <location>
        <begin position="43"/>
        <end position="64"/>
    </location>
</feature>
<feature type="compositionally biased region" description="Acidic residues" evidence="4">
    <location>
        <begin position="68"/>
        <end position="80"/>
    </location>
</feature>
<feature type="active site" evidence="1">
    <location>
        <position position="211"/>
    </location>
</feature>
<feature type="active site" description="Proton donor/acceptor" evidence="1">
    <location>
        <position position="252"/>
    </location>
</feature>
<feature type="binding site" evidence="1">
    <location>
        <position position="139"/>
    </location>
    <ligand>
        <name>Mg(2+)</name>
        <dbReference type="ChEBI" id="CHEBI:18420"/>
        <label>1</label>
    </ligand>
</feature>
<feature type="binding site" evidence="1">
    <location>
        <position position="252"/>
    </location>
    <ligand>
        <name>Mg(2+)</name>
        <dbReference type="ChEBI" id="CHEBI:18420"/>
        <label>2</label>
    </ligand>
</feature>
<feature type="binding site" evidence="1">
    <location>
        <position position="254"/>
    </location>
    <ligand>
        <name>Mg(2+)</name>
        <dbReference type="ChEBI" id="CHEBI:18420"/>
        <label>2</label>
    </ligand>
</feature>
<feature type="binding site" evidence="1">
    <location>
        <position position="350"/>
    </location>
    <ligand>
        <name>Mg(2+)</name>
        <dbReference type="ChEBI" id="CHEBI:18420"/>
        <label>1</label>
    </ligand>
</feature>
<feature type="site" description="Transition state stabilizer" evidence="1">
    <location>
        <position position="254"/>
    </location>
</feature>
<feature type="site" description="Important for catalytic activity" evidence="1">
    <location>
        <position position="324"/>
    </location>
</feature>
<feature type="site" description="Interaction with DNA substrate" evidence="1">
    <location>
        <position position="351"/>
    </location>
</feature>
<feature type="sequence conflict" description="In Ref. 1; AAC47024." evidence="5" ref="1">
    <original>Y</original>
    <variation>C</variation>
    <location>
        <position position="126"/>
    </location>
</feature>
<feature type="sequence conflict" description="In Ref. 1; AAC47024." evidence="5" ref="1">
    <original>D</original>
    <variation>V</variation>
    <location>
        <position position="203"/>
    </location>
</feature>
<comment type="cofactor">
    <cofactor evidence="1">
        <name>Mg(2+)</name>
        <dbReference type="ChEBI" id="CHEBI:18420"/>
    </cofactor>
    <cofactor evidence="1">
        <name>Mn(2+)</name>
        <dbReference type="ChEBI" id="CHEBI:29035"/>
    </cofactor>
    <text evidence="1">Probably binds two magnesium or manganese ions per subunit.</text>
</comment>
<comment type="subcellular location">
    <subcellularLocation>
        <location evidence="3">Nucleus</location>
    </subcellularLocation>
</comment>
<comment type="induction">
    <text>By DNA-damaging agents including UV, MNNG, gamma rays, bleomycin and streptozotocin.</text>
</comment>
<comment type="similarity">
    <text evidence="5">Belongs to the DNA repair enzymes AP/ExoA family.</text>
</comment>